<gene>
    <name type="primary">facA</name>
    <name type="synonym">acuA</name>
</gene>
<evidence type="ECO:0000250" key="1"/>
<evidence type="ECO:0000305" key="2"/>
<sequence length="669" mass="74287">MSDGPIQPPKPAVVHEAHEVDTFHVPKAFHDKHPSGTHIKDIEEYKKLYEESIKSPDTFWARMARELLTFDKDFETTHHGSFENGDNAWFVEGRLNASFNCVDRHALKNPDKVAIIYEADEPNEGRKITYGELMREVSRVAWTLKERGVKKGDTVGIYLPMIPEAVIAFLACSRIGAVHSVVFAGFSSDSLRDRVLDASSKVIITSDEGKRGGKIIGTKKIVDEAMKQCPDVHTVLVYKRTGAEVPWTAGRDIWWHEEVEKYPNYLAPESVSSEDPLFLLYTSGSTGKPKGVMHTTAGYLLGAAMTGKYVFDIHDDDRYFCGGDVGWITGHTYVVYAPLLLGCATVVFESTPAYPNFSRYWDVIDKHDVTQFYVAPTALRLLKRAGDEHIHHKMHSLRILGSVGEPIAAEVWKWYFECVGKEEAHICDTYWQTETGSHVITPLGGITPTKPGSASLPFFGIEPAIIDPVSGEEIVGNDVEGVLAFKQPWPSMARTVWGAHKRYMDTYLNVYKGYYFTGDGAGRDHDGYYWIRGRVDDVVNVSGHRLSTAEIEAALLEHPSVAEAAVVGIADELTGQAVNAFVSLKEGKPTEQISKDLAMQVRKSIGPFAAPKAVFVVDDLPKTRSGKIMRRILRKILSGEEDSLGDTSTLSDPSVVDKIIETVHSARQK</sequence>
<name>ACSA_PENCH</name>
<accession>P36333</accession>
<dbReference type="EC" id="6.2.1.1"/>
<dbReference type="EMBL" id="S54801">
    <property type="protein sequence ID" value="AAC60546.1"/>
    <property type="molecule type" value="Genomic_DNA"/>
</dbReference>
<dbReference type="EMBL" id="L09598">
    <property type="protein sequence ID" value="AAA02921.1"/>
    <property type="molecule type" value="Unassigned_DNA"/>
</dbReference>
<dbReference type="PIR" id="JN0781">
    <property type="entry name" value="JN0781"/>
</dbReference>
<dbReference type="SMR" id="P36333"/>
<dbReference type="OMA" id="INVSYNC"/>
<dbReference type="PhylomeDB" id="P36333"/>
<dbReference type="UniPathway" id="UPA00040"/>
<dbReference type="UniPathway" id="UPA00474"/>
<dbReference type="GO" id="GO:0005829">
    <property type="term" value="C:cytosol"/>
    <property type="evidence" value="ECO:0007669"/>
    <property type="project" value="TreeGrafter"/>
</dbReference>
<dbReference type="GO" id="GO:0003987">
    <property type="term" value="F:acetate-CoA ligase activity"/>
    <property type="evidence" value="ECO:0007669"/>
    <property type="project" value="UniProtKB-EC"/>
</dbReference>
<dbReference type="GO" id="GO:0016208">
    <property type="term" value="F:AMP binding"/>
    <property type="evidence" value="ECO:0007669"/>
    <property type="project" value="InterPro"/>
</dbReference>
<dbReference type="GO" id="GO:0005524">
    <property type="term" value="F:ATP binding"/>
    <property type="evidence" value="ECO:0007669"/>
    <property type="project" value="UniProtKB-KW"/>
</dbReference>
<dbReference type="GO" id="GO:0045150">
    <property type="term" value="P:acetoin catabolic process"/>
    <property type="evidence" value="ECO:0007669"/>
    <property type="project" value="UniProtKB-UniPathway"/>
</dbReference>
<dbReference type="GO" id="GO:0019427">
    <property type="term" value="P:acetyl-CoA biosynthetic process from acetate"/>
    <property type="evidence" value="ECO:0007669"/>
    <property type="project" value="InterPro"/>
</dbReference>
<dbReference type="GO" id="GO:0042318">
    <property type="term" value="P:penicillin biosynthetic process"/>
    <property type="evidence" value="ECO:0007669"/>
    <property type="project" value="UniProtKB-UniPathway"/>
</dbReference>
<dbReference type="CDD" id="cd05966">
    <property type="entry name" value="ACS"/>
    <property type="match status" value="1"/>
</dbReference>
<dbReference type="FunFam" id="3.30.300.30:FF:000004">
    <property type="entry name" value="Acetyl-coenzyme A synthetase"/>
    <property type="match status" value="1"/>
</dbReference>
<dbReference type="FunFam" id="3.40.50.12780:FF:000001">
    <property type="entry name" value="Acetyl-coenzyme A synthetase"/>
    <property type="match status" value="1"/>
</dbReference>
<dbReference type="Gene3D" id="3.30.300.30">
    <property type="match status" value="1"/>
</dbReference>
<dbReference type="Gene3D" id="3.40.50.12780">
    <property type="entry name" value="N-terminal domain of ligase-like"/>
    <property type="match status" value="1"/>
</dbReference>
<dbReference type="InterPro" id="IPR011904">
    <property type="entry name" value="Ac_CoA_lig"/>
</dbReference>
<dbReference type="InterPro" id="IPR032387">
    <property type="entry name" value="ACAS_N"/>
</dbReference>
<dbReference type="InterPro" id="IPR025110">
    <property type="entry name" value="AMP-bd_C"/>
</dbReference>
<dbReference type="InterPro" id="IPR045851">
    <property type="entry name" value="AMP-bd_C_sf"/>
</dbReference>
<dbReference type="InterPro" id="IPR020845">
    <property type="entry name" value="AMP-binding_CS"/>
</dbReference>
<dbReference type="InterPro" id="IPR000873">
    <property type="entry name" value="AMP-dep_synth/lig_dom"/>
</dbReference>
<dbReference type="InterPro" id="IPR042099">
    <property type="entry name" value="ANL_N_sf"/>
</dbReference>
<dbReference type="NCBIfam" id="TIGR02188">
    <property type="entry name" value="Ac_CoA_lig_AcsA"/>
    <property type="match status" value="1"/>
</dbReference>
<dbReference type="NCBIfam" id="NF001208">
    <property type="entry name" value="PRK00174.1"/>
    <property type="match status" value="1"/>
</dbReference>
<dbReference type="PANTHER" id="PTHR24095">
    <property type="entry name" value="ACETYL-COENZYME A SYNTHETASE"/>
    <property type="match status" value="1"/>
</dbReference>
<dbReference type="PANTHER" id="PTHR24095:SF14">
    <property type="entry name" value="ACETYL-COENZYME A SYNTHETASE 1"/>
    <property type="match status" value="1"/>
</dbReference>
<dbReference type="Pfam" id="PF16177">
    <property type="entry name" value="ACAS_N"/>
    <property type="match status" value="1"/>
</dbReference>
<dbReference type="Pfam" id="PF00501">
    <property type="entry name" value="AMP-binding"/>
    <property type="match status" value="1"/>
</dbReference>
<dbReference type="Pfam" id="PF13193">
    <property type="entry name" value="AMP-binding_C"/>
    <property type="match status" value="1"/>
</dbReference>
<dbReference type="SUPFAM" id="SSF56801">
    <property type="entry name" value="Acetyl-CoA synthetase-like"/>
    <property type="match status" value="1"/>
</dbReference>
<dbReference type="PROSITE" id="PS00455">
    <property type="entry name" value="AMP_BINDING"/>
    <property type="match status" value="1"/>
</dbReference>
<comment type="catalytic activity">
    <reaction>
        <text>acetate + ATP + CoA = acetyl-CoA + AMP + diphosphate</text>
        <dbReference type="Rhea" id="RHEA:23176"/>
        <dbReference type="ChEBI" id="CHEBI:30089"/>
        <dbReference type="ChEBI" id="CHEBI:30616"/>
        <dbReference type="ChEBI" id="CHEBI:33019"/>
        <dbReference type="ChEBI" id="CHEBI:57287"/>
        <dbReference type="ChEBI" id="CHEBI:57288"/>
        <dbReference type="ChEBI" id="CHEBI:456215"/>
        <dbReference type="EC" id="6.2.1.1"/>
    </reaction>
</comment>
<comment type="pathway">
    <text>Ketone degradation; acetoin degradation.</text>
</comment>
<comment type="pathway">
    <text>Antibiotic biosynthesis; penicillin biosynthesis.</text>
</comment>
<comment type="similarity">
    <text evidence="2">Belongs to the ATP-dependent AMP-binding enzyme family.</text>
</comment>
<proteinExistence type="inferred from homology"/>
<feature type="chain" id="PRO_0000208417" description="Acetyl-coenzyme A synthetase">
    <location>
        <begin position="1"/>
        <end position="669"/>
    </location>
</feature>
<feature type="binding site" evidence="1">
    <location>
        <begin position="211"/>
        <end position="214"/>
    </location>
    <ligand>
        <name>CoA</name>
        <dbReference type="ChEBI" id="CHEBI:57287"/>
    </ligand>
</feature>
<feature type="binding site" evidence="1">
    <location>
        <position position="329"/>
    </location>
    <ligand>
        <name>CoA</name>
        <dbReference type="ChEBI" id="CHEBI:57287"/>
    </ligand>
</feature>
<feature type="binding site" evidence="1">
    <location>
        <begin position="404"/>
        <end position="406"/>
    </location>
    <ligand>
        <name>ATP</name>
        <dbReference type="ChEBI" id="CHEBI:30616"/>
    </ligand>
</feature>
<feature type="binding site" evidence="1">
    <location>
        <begin position="428"/>
        <end position="433"/>
    </location>
    <ligand>
        <name>ATP</name>
        <dbReference type="ChEBI" id="CHEBI:30616"/>
    </ligand>
</feature>
<feature type="binding site" evidence="1">
    <location>
        <position position="519"/>
    </location>
    <ligand>
        <name>ATP</name>
        <dbReference type="ChEBI" id="CHEBI:30616"/>
    </ligand>
</feature>
<feature type="binding site" evidence="1">
    <location>
        <position position="534"/>
    </location>
    <ligand>
        <name>ATP</name>
        <dbReference type="ChEBI" id="CHEBI:30616"/>
    </ligand>
</feature>
<feature type="binding site" evidence="1">
    <location>
        <position position="542"/>
    </location>
    <ligand>
        <name>CoA</name>
        <dbReference type="ChEBI" id="CHEBI:57287"/>
    </ligand>
</feature>
<feature type="binding site" evidence="1">
    <location>
        <position position="545"/>
    </location>
    <ligand>
        <name>ATP</name>
        <dbReference type="ChEBI" id="CHEBI:30616"/>
    </ligand>
</feature>
<feature type="binding site" evidence="1">
    <location>
        <position position="602"/>
    </location>
    <ligand>
        <name>CoA</name>
        <dbReference type="ChEBI" id="CHEBI:57287"/>
    </ligand>
</feature>
<protein>
    <recommendedName>
        <fullName>Acetyl-coenzyme A synthetase</fullName>
        <ecNumber>6.2.1.1</ecNumber>
    </recommendedName>
    <alternativeName>
        <fullName>Acetate--CoA ligase</fullName>
    </alternativeName>
    <alternativeName>
        <fullName>Acyl-activating enzyme</fullName>
    </alternativeName>
</protein>
<keyword id="KW-0006">Acetoin catabolism</keyword>
<keyword id="KW-0067">ATP-binding</keyword>
<keyword id="KW-0436">Ligase</keyword>
<keyword id="KW-0547">Nucleotide-binding</keyword>
<organism>
    <name type="scientific">Penicillium chrysogenum</name>
    <name type="common">Penicillium notatum</name>
    <dbReference type="NCBI Taxonomy" id="5076"/>
    <lineage>
        <taxon>Eukaryota</taxon>
        <taxon>Fungi</taxon>
        <taxon>Dikarya</taxon>
        <taxon>Ascomycota</taxon>
        <taxon>Pezizomycotina</taxon>
        <taxon>Eurotiomycetes</taxon>
        <taxon>Eurotiomycetidae</taxon>
        <taxon>Eurotiales</taxon>
        <taxon>Aspergillaceae</taxon>
        <taxon>Penicillium</taxon>
        <taxon>Penicillium chrysogenum species complex</taxon>
    </lineage>
</organism>
<reference key="1">
    <citation type="journal article" date="1993" name="Gene">
        <title>Characterisation of the gene encoding acetyl-CoA synthetase in Penicillium chrysogenum: conservation of intron position in plectomycetes.</title>
        <authorList>
            <person name="Martinez-Blanco H."/>
            <person name="Orejas M."/>
            <person name="Reglero A."/>
            <person name="Luengo J.M."/>
            <person name="Penalva M.A."/>
        </authorList>
    </citation>
    <scope>NUCLEOTIDE SEQUENCE</scope>
</reference>
<reference key="2">
    <citation type="journal article" date="1993" name="Appl. Microbiol. Biotechnol.">
        <title>Development of a new transformant selection system for Penicillium chrysogenum: isolation and characterization of the P. chrysogenum acetyl-coenzyme A synthetase gene (facA) and its use as a homologous selection marker.</title>
        <authorList>
            <person name="Gouka R.J."/>
            <person name="van Hartingsveldt W."/>
            <person name="Bovenberg R.A."/>
            <person name="van Zeijl C.M."/>
            <person name="van den Hondel C.A."/>
            <person name="van Gorcom R.F."/>
        </authorList>
    </citation>
    <scope>NUCLEOTIDE SEQUENCE</scope>
</reference>